<feature type="chain" id="PRO_0000110570" description="Probable chemoreceptor y4sI">
    <location>
        <begin position="1"/>
        <end position="756"/>
    </location>
</feature>
<feature type="transmembrane region" description="Helical" evidence="2">
    <location>
        <begin position="26"/>
        <end position="46"/>
    </location>
</feature>
<feature type="transmembrane region" description="Helical" evidence="2">
    <location>
        <begin position="330"/>
        <end position="350"/>
    </location>
</feature>
<feature type="domain" description="HAMP 1" evidence="3">
    <location>
        <begin position="353"/>
        <end position="406"/>
    </location>
</feature>
<feature type="domain" description="HAMP 2" evidence="3">
    <location>
        <begin position="434"/>
        <end position="486"/>
    </location>
</feature>
<feature type="domain" description="Methyl-accepting transducer" evidence="4">
    <location>
        <begin position="491"/>
        <end position="720"/>
    </location>
</feature>
<feature type="region of interest" description="Disordered" evidence="6">
    <location>
        <begin position="736"/>
        <end position="756"/>
    </location>
</feature>
<sequence>MGGRMPLLNVSPLKWPISLKIPAMTVCVAVLSCTTVATFAGITSVATTRSLIEKHLNYVAISMRDALLTKLQATKFEVEGLSANPGLLQLFNNTSVGFAAVSPTDLTAASVDKVESGKFSLAATPTTKFYVDNYQKLDAWLKPLAAKQSYSGILLANAEGAIIYSTGTNPVGPVDANGSINLAIASSANSQEAVMTDFTPPTLSAPGQALYAVAIVHPFIPDKRNGTLLISMSTEMLNAVMGQAKGFGPHSEALIAGSDGKPRSLSSISRDEDAEAVVNSDLLSQGIKTSNFGAQEVLSASQQLKWQDHQWSIIALEPEADVVSASTAMLIKIIGITAATAILALAMAILASRSISGPLAGLVSIMKRLANGDINVRVAGVDRRDEMGEMSRAVLVFRDNAIARVAAEDDARSAEEAMEHDRRMMEMERSERLDEQARVMAQIGGGLAALSDGVFSRPITVDFPEEYRPLKSDFNRALGQLRETIRTVAAQAASMSSIVSEISCATDVLAKRTEHQAIVLDGAVNTMDAISNDVSVTANAANNADALVRDAHSAAAASDEIVSSAIAGMLEIEESSAKIATIVSVIEEIAHQTNLLALNAGVEASRAGEAGKGFAVVASEVRALAQRSSDAAKEIKDLINVSTQRVERGKELVDSASELLKHIAARVDLIRTTVSNIAATATSQAKHLSEFQTTIAEIDQSTQQTAAMAEESDAACRSLNAEAQHLLELIQQFELGGGSSTRQPQSPPTQRYFMSR</sequence>
<accession>P55652</accession>
<gene>
    <name type="ordered locus">NGR_a01640</name>
    <name type="ORF">y4sI</name>
</gene>
<organism>
    <name type="scientific">Sinorhizobium fredii (strain NBRC 101917 / NGR234)</name>
    <dbReference type="NCBI Taxonomy" id="394"/>
    <lineage>
        <taxon>Bacteria</taxon>
        <taxon>Pseudomonadati</taxon>
        <taxon>Pseudomonadota</taxon>
        <taxon>Alphaproteobacteria</taxon>
        <taxon>Hyphomicrobiales</taxon>
        <taxon>Rhizobiaceae</taxon>
        <taxon>Sinorhizobium/Ensifer group</taxon>
        <taxon>Sinorhizobium</taxon>
    </lineage>
</organism>
<dbReference type="EMBL" id="U00090">
    <property type="protein sequence ID" value="AAB91848.1"/>
    <property type="molecule type" value="Genomic_DNA"/>
</dbReference>
<dbReference type="PIR" id="S43964">
    <property type="entry name" value="S43964"/>
</dbReference>
<dbReference type="RefSeq" id="NP_444061.1">
    <property type="nucleotide sequence ID" value="NC_000914.2"/>
</dbReference>
<dbReference type="SMR" id="P55652"/>
<dbReference type="KEGG" id="rhi:NGR_a01640"/>
<dbReference type="PATRIC" id="fig|394.7.peg.154"/>
<dbReference type="eggNOG" id="COG0840">
    <property type="taxonomic scope" value="Bacteria"/>
</dbReference>
<dbReference type="HOGENOM" id="CLU_000445_107_12_5"/>
<dbReference type="OrthoDB" id="7293398at2"/>
<dbReference type="Proteomes" id="UP000001054">
    <property type="component" value="Plasmid pNGR234a"/>
</dbReference>
<dbReference type="GO" id="GO:0005886">
    <property type="term" value="C:plasma membrane"/>
    <property type="evidence" value="ECO:0007669"/>
    <property type="project" value="UniProtKB-SubCell"/>
</dbReference>
<dbReference type="GO" id="GO:0004888">
    <property type="term" value="F:transmembrane signaling receptor activity"/>
    <property type="evidence" value="ECO:0007669"/>
    <property type="project" value="InterPro"/>
</dbReference>
<dbReference type="GO" id="GO:0006935">
    <property type="term" value="P:chemotaxis"/>
    <property type="evidence" value="ECO:0007669"/>
    <property type="project" value="UniProtKB-KW"/>
</dbReference>
<dbReference type="GO" id="GO:0007165">
    <property type="term" value="P:signal transduction"/>
    <property type="evidence" value="ECO:0007669"/>
    <property type="project" value="UniProtKB-KW"/>
</dbReference>
<dbReference type="CDD" id="cd06225">
    <property type="entry name" value="HAMP"/>
    <property type="match status" value="1"/>
</dbReference>
<dbReference type="CDD" id="cd11386">
    <property type="entry name" value="MCP_signal"/>
    <property type="match status" value="1"/>
</dbReference>
<dbReference type="Gene3D" id="6.10.340.10">
    <property type="match status" value="1"/>
</dbReference>
<dbReference type="Gene3D" id="1.10.287.950">
    <property type="entry name" value="Methyl-accepting chemotaxis protein"/>
    <property type="match status" value="1"/>
</dbReference>
<dbReference type="InterPro" id="IPR004090">
    <property type="entry name" value="Chemotax_Me-accpt_rcpt"/>
</dbReference>
<dbReference type="InterPro" id="IPR003660">
    <property type="entry name" value="HAMP_dom"/>
</dbReference>
<dbReference type="InterPro" id="IPR051310">
    <property type="entry name" value="MCP_chemotaxis"/>
</dbReference>
<dbReference type="InterPro" id="IPR004089">
    <property type="entry name" value="MCPsignal_dom"/>
</dbReference>
<dbReference type="PANTHER" id="PTHR43531:SF11">
    <property type="entry name" value="METHYL-ACCEPTING CHEMOTAXIS PROTEIN 3"/>
    <property type="match status" value="1"/>
</dbReference>
<dbReference type="PANTHER" id="PTHR43531">
    <property type="entry name" value="PROTEIN ICFG"/>
    <property type="match status" value="1"/>
</dbReference>
<dbReference type="Pfam" id="PF00672">
    <property type="entry name" value="HAMP"/>
    <property type="match status" value="1"/>
</dbReference>
<dbReference type="Pfam" id="PF00015">
    <property type="entry name" value="MCPsignal"/>
    <property type="match status" value="1"/>
</dbReference>
<dbReference type="PRINTS" id="PR00260">
    <property type="entry name" value="CHEMTRNSDUCR"/>
</dbReference>
<dbReference type="SMART" id="SM00304">
    <property type="entry name" value="HAMP"/>
    <property type="match status" value="2"/>
</dbReference>
<dbReference type="SMART" id="SM00283">
    <property type="entry name" value="MA"/>
    <property type="match status" value="1"/>
</dbReference>
<dbReference type="SUPFAM" id="SSF158472">
    <property type="entry name" value="HAMP domain-like"/>
    <property type="match status" value="1"/>
</dbReference>
<dbReference type="SUPFAM" id="SSF58104">
    <property type="entry name" value="Methyl-accepting chemotaxis protein (MCP) signaling domain"/>
    <property type="match status" value="1"/>
</dbReference>
<dbReference type="PROSITE" id="PS50111">
    <property type="entry name" value="CHEMOTAXIS_TRANSDUC_2"/>
    <property type="match status" value="1"/>
</dbReference>
<dbReference type="PROSITE" id="PS50885">
    <property type="entry name" value="HAMP"/>
    <property type="match status" value="2"/>
</dbReference>
<dbReference type="PROSITE" id="PS51257">
    <property type="entry name" value="PROKAR_LIPOPROTEIN"/>
    <property type="match status" value="1"/>
</dbReference>
<evidence type="ECO:0000250" key="1"/>
<evidence type="ECO:0000255" key="2"/>
<evidence type="ECO:0000255" key="3">
    <source>
        <dbReference type="PROSITE-ProRule" id="PRU00102"/>
    </source>
</evidence>
<evidence type="ECO:0000255" key="4">
    <source>
        <dbReference type="PROSITE-ProRule" id="PRU00284"/>
    </source>
</evidence>
<evidence type="ECO:0000255" key="5">
    <source>
        <dbReference type="PROSITE-ProRule" id="PRU00303"/>
    </source>
</evidence>
<evidence type="ECO:0000256" key="6">
    <source>
        <dbReference type="SAM" id="MobiDB-lite"/>
    </source>
</evidence>
<evidence type="ECO:0000305" key="7"/>
<geneLocation type="plasmid">
    <name>sym pNGR234a</name>
</geneLocation>
<reference key="1">
    <citation type="journal article" date="1997" name="Nature">
        <title>Molecular basis of symbiosis between Rhizobium and legumes.</title>
        <authorList>
            <person name="Freiberg C.A."/>
            <person name="Fellay R."/>
            <person name="Bairoch A."/>
            <person name="Broughton W.J."/>
            <person name="Rosenthal A."/>
            <person name="Perret X."/>
        </authorList>
    </citation>
    <scope>NUCLEOTIDE SEQUENCE [LARGE SCALE GENOMIC DNA]</scope>
    <source>
        <strain>NBRC 101917 / NGR234</strain>
    </source>
</reference>
<reference key="2">
    <citation type="journal article" date="2009" name="Appl. Environ. Microbiol.">
        <title>Rhizobium sp. strain NGR234 possesses a remarkable number of secretion systems.</title>
        <authorList>
            <person name="Schmeisser C."/>
            <person name="Liesegang H."/>
            <person name="Krysciak D."/>
            <person name="Bakkou N."/>
            <person name="Le Quere A."/>
            <person name="Wollherr A."/>
            <person name="Heinemeyer I."/>
            <person name="Morgenstern B."/>
            <person name="Pommerening-Roeser A."/>
            <person name="Flores M."/>
            <person name="Palacios R."/>
            <person name="Brenner S."/>
            <person name="Gottschalk G."/>
            <person name="Schmitz R.A."/>
            <person name="Broughton W.J."/>
            <person name="Perret X."/>
            <person name="Strittmatter A.W."/>
            <person name="Streit W.R."/>
        </authorList>
    </citation>
    <scope>NUCLEOTIDE SEQUENCE [LARGE SCALE GENOMIC DNA]</scope>
    <source>
        <strain>NBRC 101917 / NGR234</strain>
    </source>
</reference>
<keyword id="KW-1003">Cell membrane</keyword>
<keyword id="KW-0145">Chemotaxis</keyword>
<keyword id="KW-0472">Membrane</keyword>
<keyword id="KW-0488">Methylation</keyword>
<keyword id="KW-0614">Plasmid</keyword>
<keyword id="KW-1185">Reference proteome</keyword>
<keyword id="KW-0677">Repeat</keyword>
<keyword id="KW-0807">Transducer</keyword>
<keyword id="KW-0812">Transmembrane</keyword>
<keyword id="KW-1133">Transmembrane helix</keyword>
<proteinExistence type="inferred from homology"/>
<comment type="function">
    <text evidence="1">Chemotactic-signal transducers respond to changes in the concentration of attractants and repellents in the environment, transduce a signal from the outside to the inside of the cell, and facilitate sensory adaptation through the variation of the level of methylation. Attractants increase the level of methylation while repellents decrease the level of methylation (By similarity).</text>
</comment>
<comment type="subcellular location">
    <subcellularLocation>
        <location evidence="5">Cell membrane</location>
        <topology evidence="7">Multi-pass membrane protein</topology>
    </subcellularLocation>
</comment>
<comment type="similarity">
    <text evidence="7">Belongs to the methyl-accepting chemotaxis (MCP) protein family.</text>
</comment>
<protein>
    <recommendedName>
        <fullName>Probable chemoreceptor y4sI</fullName>
    </recommendedName>
    <alternativeName>
        <fullName>Methyl-accepting chemotaxis protein</fullName>
    </alternativeName>
</protein>
<name>Y4SI_SINFN</name>